<feature type="chain" id="PRO_0000395959" description="Pup--protein ligase">
    <location>
        <begin position="1"/>
        <end position="452"/>
    </location>
</feature>
<feature type="active site" description="Proton acceptor" evidence="1">
    <location>
        <position position="57"/>
    </location>
</feature>
<feature type="binding site" evidence="1">
    <location>
        <position position="9"/>
    </location>
    <ligand>
        <name>Mg(2+)</name>
        <dbReference type="ChEBI" id="CHEBI:18420"/>
    </ligand>
</feature>
<feature type="binding site" evidence="1">
    <location>
        <position position="53"/>
    </location>
    <ligand>
        <name>ATP</name>
        <dbReference type="ChEBI" id="CHEBI:30616"/>
    </ligand>
</feature>
<feature type="binding site" evidence="1">
    <location>
        <position position="55"/>
    </location>
    <ligand>
        <name>Mg(2+)</name>
        <dbReference type="ChEBI" id="CHEBI:18420"/>
    </ligand>
</feature>
<feature type="binding site" evidence="1">
    <location>
        <position position="63"/>
    </location>
    <ligand>
        <name>Mg(2+)</name>
        <dbReference type="ChEBI" id="CHEBI:18420"/>
    </ligand>
</feature>
<feature type="binding site" evidence="1">
    <location>
        <position position="66"/>
    </location>
    <ligand>
        <name>ATP</name>
        <dbReference type="ChEBI" id="CHEBI:30616"/>
    </ligand>
</feature>
<feature type="binding site" evidence="1">
    <location>
        <position position="419"/>
    </location>
    <ligand>
        <name>ATP</name>
        <dbReference type="ChEBI" id="CHEBI:30616"/>
    </ligand>
</feature>
<name>PAFA_STRRD</name>
<sequence>MDRRIFGLENEYGVTCTFRGQRRLSPDEVARYLFRRVVSWGRSSNVFLRNGARLYLDVGSHPEYATPECDNVVELVTHDKAGERILEGLLVDAEKRLREEGIAGDIYLFKNNTDSAGNSYGCHENYLVGRHGEFGRLADVLIPFLVTRQIVCGAGKVLQTPRGAVYCVSQRAEHIWEGVSSATTRSRPIINTRDEPHADAERFRRLHVIVGDSNMSETTMLLKVGATDLVLRMIEAGTVMRDLSLENPIRAIREVSHDMTGRRRVRLANGREASSLEIQQEYLSKARDFVDRRGGDEISHRVLELWERTLNAVETGNLDLVAREIDWVTKYQLIERYRKKYDLPLSSPRVAQLDLAYHDVHRRRGLFYLLQKRGAVERVASDLKIFEAKSVPPQTTRARLRGEFIRKAQEKRRDFTVDWVHLKLNDQAQRTVLCKDPFRSVDERVDKLIAGM</sequence>
<reference key="1">
    <citation type="journal article" date="2010" name="Stand. Genomic Sci.">
        <title>Complete genome sequence of Streptosporangium roseum type strain (NI 9100).</title>
        <authorList>
            <person name="Nolan M."/>
            <person name="Sikorski J."/>
            <person name="Jando M."/>
            <person name="Lucas S."/>
            <person name="Lapidus A."/>
            <person name="Glavina Del Rio T."/>
            <person name="Chen F."/>
            <person name="Tice H."/>
            <person name="Pitluck S."/>
            <person name="Cheng J.F."/>
            <person name="Chertkov O."/>
            <person name="Sims D."/>
            <person name="Meincke L."/>
            <person name="Brettin T."/>
            <person name="Han C."/>
            <person name="Detter J.C."/>
            <person name="Bruce D."/>
            <person name="Goodwin L."/>
            <person name="Land M."/>
            <person name="Hauser L."/>
            <person name="Chang Y.J."/>
            <person name="Jeffries C.D."/>
            <person name="Ivanova N."/>
            <person name="Mavromatis K."/>
            <person name="Mikhailova N."/>
            <person name="Chen A."/>
            <person name="Palaniappan K."/>
            <person name="Chain P."/>
            <person name="Rohde M."/>
            <person name="Goker M."/>
            <person name="Bristow J."/>
            <person name="Eisen J.A."/>
            <person name="Markowitz V."/>
            <person name="Hugenholtz P."/>
            <person name="Kyrpides N.C."/>
            <person name="Klenk H.P."/>
        </authorList>
    </citation>
    <scope>NUCLEOTIDE SEQUENCE [LARGE SCALE GENOMIC DNA]</scope>
    <source>
        <strain>ATCC 12428 / DSM 43021 / JCM 3005 / KCTC 9067 / NCIMB 10171 / NRRL 2505 / NI 9100</strain>
    </source>
</reference>
<organism>
    <name type="scientific">Streptosporangium roseum (strain ATCC 12428 / DSM 43021 / JCM 3005 / KCTC 9067 / NCIMB 10171 / NRRL 2505 / NI 9100)</name>
    <dbReference type="NCBI Taxonomy" id="479432"/>
    <lineage>
        <taxon>Bacteria</taxon>
        <taxon>Bacillati</taxon>
        <taxon>Actinomycetota</taxon>
        <taxon>Actinomycetes</taxon>
        <taxon>Streptosporangiales</taxon>
        <taxon>Streptosporangiaceae</taxon>
        <taxon>Streptosporangium</taxon>
    </lineage>
</organism>
<accession>D2ATU8</accession>
<proteinExistence type="inferred from homology"/>
<protein>
    <recommendedName>
        <fullName evidence="1">Pup--protein ligase</fullName>
        <ecNumber evidence="1">6.3.1.19</ecNumber>
    </recommendedName>
    <alternativeName>
        <fullName evidence="1">Proteasome accessory factor A</fullName>
    </alternativeName>
    <alternativeName>
        <fullName evidence="1">Pup-conjugating enzyme</fullName>
    </alternativeName>
</protein>
<dbReference type="EC" id="6.3.1.19" evidence="1"/>
<dbReference type="EMBL" id="CP001814">
    <property type="protein sequence ID" value="ACZ88603.1"/>
    <property type="molecule type" value="Genomic_DNA"/>
</dbReference>
<dbReference type="RefSeq" id="WP_012892338.1">
    <property type="nucleotide sequence ID" value="NC_013595.1"/>
</dbReference>
<dbReference type="SMR" id="D2ATU8"/>
<dbReference type="STRING" id="479432.Sros_5868"/>
<dbReference type="MEROPS" id="U72.001"/>
<dbReference type="KEGG" id="sro:Sros_5868"/>
<dbReference type="eggNOG" id="COG0638">
    <property type="taxonomic scope" value="Bacteria"/>
</dbReference>
<dbReference type="HOGENOM" id="CLU_040524_0_1_11"/>
<dbReference type="OrthoDB" id="9760627at2"/>
<dbReference type="UniPathway" id="UPA00997"/>
<dbReference type="UniPathway" id="UPA00998"/>
<dbReference type="Proteomes" id="UP000002029">
    <property type="component" value="Chromosome"/>
</dbReference>
<dbReference type="GO" id="GO:0005524">
    <property type="term" value="F:ATP binding"/>
    <property type="evidence" value="ECO:0007669"/>
    <property type="project" value="UniProtKB-UniRule"/>
</dbReference>
<dbReference type="GO" id="GO:0016879">
    <property type="term" value="F:ligase activity, forming carbon-nitrogen bonds"/>
    <property type="evidence" value="ECO:0007669"/>
    <property type="project" value="InterPro"/>
</dbReference>
<dbReference type="GO" id="GO:0000287">
    <property type="term" value="F:magnesium ion binding"/>
    <property type="evidence" value="ECO:0007669"/>
    <property type="project" value="UniProtKB-UniRule"/>
</dbReference>
<dbReference type="GO" id="GO:0019787">
    <property type="term" value="F:ubiquitin-like protein transferase activity"/>
    <property type="evidence" value="ECO:0007669"/>
    <property type="project" value="UniProtKB-UniRule"/>
</dbReference>
<dbReference type="GO" id="GO:0019941">
    <property type="term" value="P:modification-dependent protein catabolic process"/>
    <property type="evidence" value="ECO:0007669"/>
    <property type="project" value="UniProtKB-UniRule"/>
</dbReference>
<dbReference type="GO" id="GO:0010498">
    <property type="term" value="P:proteasomal protein catabolic process"/>
    <property type="evidence" value="ECO:0007669"/>
    <property type="project" value="UniProtKB-UniRule"/>
</dbReference>
<dbReference type="GO" id="GO:0070490">
    <property type="term" value="P:protein pupylation"/>
    <property type="evidence" value="ECO:0007669"/>
    <property type="project" value="UniProtKB-UniRule"/>
</dbReference>
<dbReference type="HAMAP" id="MF_02111">
    <property type="entry name" value="Pup_ligase"/>
    <property type="match status" value="1"/>
</dbReference>
<dbReference type="InterPro" id="IPR022279">
    <property type="entry name" value="Pup_ligase"/>
</dbReference>
<dbReference type="InterPro" id="IPR004347">
    <property type="entry name" value="Pup_ligase/deamidase"/>
</dbReference>
<dbReference type="NCBIfam" id="TIGR03686">
    <property type="entry name" value="pupylate_PafA"/>
    <property type="match status" value="1"/>
</dbReference>
<dbReference type="PANTHER" id="PTHR42307">
    <property type="entry name" value="PUP DEAMIDASE/DEPUPYLASE"/>
    <property type="match status" value="1"/>
</dbReference>
<dbReference type="PANTHER" id="PTHR42307:SF3">
    <property type="entry name" value="PUP--PROTEIN LIGASE"/>
    <property type="match status" value="1"/>
</dbReference>
<dbReference type="Pfam" id="PF03136">
    <property type="entry name" value="Pup_ligase"/>
    <property type="match status" value="1"/>
</dbReference>
<dbReference type="PIRSF" id="PIRSF018077">
    <property type="entry name" value="UCP018077"/>
    <property type="match status" value="1"/>
</dbReference>
<keyword id="KW-0067">ATP-binding</keyword>
<keyword id="KW-0436">Ligase</keyword>
<keyword id="KW-0460">Magnesium</keyword>
<keyword id="KW-0479">Metal-binding</keyword>
<keyword id="KW-0547">Nucleotide-binding</keyword>
<keyword id="KW-1185">Reference proteome</keyword>
<keyword id="KW-0833">Ubl conjugation pathway</keyword>
<gene>
    <name evidence="1" type="primary">pafA</name>
    <name type="ordered locus">Sros_5868</name>
</gene>
<comment type="function">
    <text evidence="1">Catalyzes the covalent attachment of the prokaryotic ubiquitin-like protein modifier Pup to the proteasomal substrate proteins, thereby targeting them for proteasomal degradation. This tagging system is termed pupylation. The ligation reaction involves the side-chain carboxylate of the C-terminal glutamate of Pup and the side-chain amino group of a substrate lysine.</text>
</comment>
<comment type="catalytic activity">
    <reaction evidence="1">
        <text>ATP + [prokaryotic ubiquitin-like protein]-L-glutamate + [protein]-L-lysine = ADP + phosphate + N(6)-([prokaryotic ubiquitin-like protein]-gamma-L-glutamyl)-[protein]-L-lysine.</text>
        <dbReference type="EC" id="6.3.1.19"/>
    </reaction>
</comment>
<comment type="pathway">
    <text evidence="1">Protein degradation; proteasomal Pup-dependent pathway.</text>
</comment>
<comment type="pathway">
    <text evidence="1">Protein modification; protein pupylation.</text>
</comment>
<comment type="miscellaneous">
    <text evidence="1">The reaction mechanism probably proceeds via the activation of Pup by phosphorylation of its C-terminal glutamate, which is then subject to nucleophilic attack by the substrate lysine, resulting in an isopeptide bond and the release of phosphate as a good leaving group.</text>
</comment>
<comment type="similarity">
    <text evidence="1">Belongs to the Pup ligase/Pup deamidase family. Pup-conjugating enzyme subfamily.</text>
</comment>
<evidence type="ECO:0000255" key="1">
    <source>
        <dbReference type="HAMAP-Rule" id="MF_02111"/>
    </source>
</evidence>